<sequence>MELQFLGTGAGQPAKQRNVSSLALKLLDEINEVWMFDCGEGTQRQILETTIKPRKIRKIFITHLHGDHIFGLPGFLSSRSFQASEEQTDLDIYGPIGIKTYVLTSLKVSGARVPYQIHFHEFDDKSLGKIMETDKFEVYAERLAHTIFCMGYRVVQKDLEGTLDAEALKAAGVPFGPLFGKIKNGQDVELEDGRLICAKDYISAPKKGKIITIIGDTRKTSASVKLAKDADVLVHESTYGKGDERIARNHGHSTNMQAAQIAHEAGAKRLLLNHVSARFLGRDCRQMEKDAATIFENVKMVQDLEEVII</sequence>
<comment type="function">
    <text evidence="1">Zinc phosphodiesterase, which displays some tRNA 3'-processing endonuclease activity. Probably involved in tRNA maturation, by removing a 3'-trailer from precursor tRNA.</text>
</comment>
<comment type="catalytic activity">
    <reaction evidence="1">
        <text>Endonucleolytic cleavage of RNA, removing extra 3' nucleotides from tRNA precursor, generating 3' termini of tRNAs. A 3'-hydroxy group is left at the tRNA terminus and a 5'-phosphoryl group is left at the trailer molecule.</text>
        <dbReference type="EC" id="3.1.26.11"/>
    </reaction>
</comment>
<comment type="cofactor">
    <cofactor evidence="1">
        <name>Zn(2+)</name>
        <dbReference type="ChEBI" id="CHEBI:29105"/>
    </cofactor>
    <text evidence="1">Binds 2 Zn(2+) ions.</text>
</comment>
<comment type="subunit">
    <text evidence="1">Homodimer.</text>
</comment>
<comment type="similarity">
    <text evidence="1">Belongs to the RNase Z family.</text>
</comment>
<gene>
    <name evidence="1" type="primary">rnz</name>
    <name type="ordered locus">MGAS9429_Spy0782</name>
</gene>
<protein>
    <recommendedName>
        <fullName evidence="1">Ribonuclease Z</fullName>
        <shortName evidence="1">RNase Z</shortName>
        <ecNumber evidence="1">3.1.26.11</ecNumber>
    </recommendedName>
    <alternativeName>
        <fullName evidence="1">tRNA 3 endonuclease</fullName>
    </alternativeName>
    <alternativeName>
        <fullName evidence="1">tRNase Z</fullName>
    </alternativeName>
</protein>
<proteinExistence type="inferred from homology"/>
<evidence type="ECO:0000255" key="1">
    <source>
        <dbReference type="HAMAP-Rule" id="MF_01818"/>
    </source>
</evidence>
<dbReference type="EC" id="3.1.26.11" evidence="1"/>
<dbReference type="EMBL" id="CP000259">
    <property type="protein sequence ID" value="ABF31970.1"/>
    <property type="molecule type" value="Genomic_DNA"/>
</dbReference>
<dbReference type="RefSeq" id="WP_002984894.1">
    <property type="nucleotide sequence ID" value="NC_008021.1"/>
</dbReference>
<dbReference type="SMR" id="Q1JM42"/>
<dbReference type="KEGG" id="spk:MGAS9429_Spy0782"/>
<dbReference type="HOGENOM" id="CLU_031317_2_0_9"/>
<dbReference type="Proteomes" id="UP000002433">
    <property type="component" value="Chromosome"/>
</dbReference>
<dbReference type="GO" id="GO:0042781">
    <property type="term" value="F:3'-tRNA processing endoribonuclease activity"/>
    <property type="evidence" value="ECO:0007669"/>
    <property type="project" value="UniProtKB-UniRule"/>
</dbReference>
<dbReference type="GO" id="GO:0008270">
    <property type="term" value="F:zinc ion binding"/>
    <property type="evidence" value="ECO:0007669"/>
    <property type="project" value="UniProtKB-UniRule"/>
</dbReference>
<dbReference type="CDD" id="cd07717">
    <property type="entry name" value="RNaseZ_ZiPD-like_MBL-fold"/>
    <property type="match status" value="1"/>
</dbReference>
<dbReference type="FunFam" id="3.60.15.10:FF:000002">
    <property type="entry name" value="Ribonuclease Z"/>
    <property type="match status" value="1"/>
</dbReference>
<dbReference type="Gene3D" id="3.60.15.10">
    <property type="entry name" value="Ribonuclease Z/Hydroxyacylglutathione hydrolase-like"/>
    <property type="match status" value="1"/>
</dbReference>
<dbReference type="HAMAP" id="MF_01818">
    <property type="entry name" value="RNase_Z_BN"/>
    <property type="match status" value="1"/>
</dbReference>
<dbReference type="InterPro" id="IPR001279">
    <property type="entry name" value="Metallo-B-lactamas"/>
</dbReference>
<dbReference type="InterPro" id="IPR036866">
    <property type="entry name" value="RibonucZ/Hydroxyglut_hydro"/>
</dbReference>
<dbReference type="InterPro" id="IPR013471">
    <property type="entry name" value="RNase_Z/BN"/>
</dbReference>
<dbReference type="NCBIfam" id="NF000801">
    <property type="entry name" value="PRK00055.1-3"/>
    <property type="match status" value="1"/>
</dbReference>
<dbReference type="NCBIfam" id="TIGR02651">
    <property type="entry name" value="RNase_Z"/>
    <property type="match status" value="1"/>
</dbReference>
<dbReference type="PANTHER" id="PTHR46018">
    <property type="entry name" value="ZINC PHOSPHODIESTERASE ELAC PROTEIN 1"/>
    <property type="match status" value="1"/>
</dbReference>
<dbReference type="PANTHER" id="PTHR46018:SF2">
    <property type="entry name" value="ZINC PHOSPHODIESTERASE ELAC PROTEIN 1"/>
    <property type="match status" value="1"/>
</dbReference>
<dbReference type="Pfam" id="PF00753">
    <property type="entry name" value="Lactamase_B"/>
    <property type="match status" value="1"/>
</dbReference>
<dbReference type="SUPFAM" id="SSF56281">
    <property type="entry name" value="Metallo-hydrolase/oxidoreductase"/>
    <property type="match status" value="1"/>
</dbReference>
<name>RNZ_STRPC</name>
<feature type="chain" id="PRO_1000070336" description="Ribonuclease Z">
    <location>
        <begin position="1"/>
        <end position="309"/>
    </location>
</feature>
<feature type="active site" description="Proton acceptor" evidence="1">
    <location>
        <position position="67"/>
    </location>
</feature>
<feature type="binding site" evidence="1">
    <location>
        <position position="63"/>
    </location>
    <ligand>
        <name>Zn(2+)</name>
        <dbReference type="ChEBI" id="CHEBI:29105"/>
        <label>1</label>
        <note>catalytic</note>
    </ligand>
</feature>
<feature type="binding site" evidence="1">
    <location>
        <position position="65"/>
    </location>
    <ligand>
        <name>Zn(2+)</name>
        <dbReference type="ChEBI" id="CHEBI:29105"/>
        <label>1</label>
        <note>catalytic</note>
    </ligand>
</feature>
<feature type="binding site" evidence="1">
    <location>
        <position position="67"/>
    </location>
    <ligand>
        <name>Zn(2+)</name>
        <dbReference type="ChEBI" id="CHEBI:29105"/>
        <label>2</label>
        <note>catalytic</note>
    </ligand>
</feature>
<feature type="binding site" evidence="1">
    <location>
        <position position="68"/>
    </location>
    <ligand>
        <name>Zn(2+)</name>
        <dbReference type="ChEBI" id="CHEBI:29105"/>
        <label>2</label>
        <note>catalytic</note>
    </ligand>
</feature>
<feature type="binding site" evidence="1">
    <location>
        <position position="145"/>
    </location>
    <ligand>
        <name>Zn(2+)</name>
        <dbReference type="ChEBI" id="CHEBI:29105"/>
        <label>1</label>
        <note>catalytic</note>
    </ligand>
</feature>
<feature type="binding site" evidence="1">
    <location>
        <position position="216"/>
    </location>
    <ligand>
        <name>Zn(2+)</name>
        <dbReference type="ChEBI" id="CHEBI:29105"/>
        <label>1</label>
        <note>catalytic</note>
    </ligand>
</feature>
<feature type="binding site" evidence="1">
    <location>
        <position position="216"/>
    </location>
    <ligand>
        <name>Zn(2+)</name>
        <dbReference type="ChEBI" id="CHEBI:29105"/>
        <label>2</label>
        <note>catalytic</note>
    </ligand>
</feature>
<feature type="binding site" evidence="1">
    <location>
        <position position="274"/>
    </location>
    <ligand>
        <name>Zn(2+)</name>
        <dbReference type="ChEBI" id="CHEBI:29105"/>
        <label>2</label>
        <note>catalytic</note>
    </ligand>
</feature>
<keyword id="KW-0255">Endonuclease</keyword>
<keyword id="KW-0378">Hydrolase</keyword>
<keyword id="KW-0479">Metal-binding</keyword>
<keyword id="KW-0540">Nuclease</keyword>
<keyword id="KW-0819">tRNA processing</keyword>
<keyword id="KW-0862">Zinc</keyword>
<reference key="1">
    <citation type="journal article" date="2006" name="Proc. Natl. Acad. Sci. U.S.A.">
        <title>Molecular genetic anatomy of inter- and intraserotype variation in the human bacterial pathogen group A Streptococcus.</title>
        <authorList>
            <person name="Beres S.B."/>
            <person name="Richter E.W."/>
            <person name="Nagiec M.J."/>
            <person name="Sumby P."/>
            <person name="Porcella S.F."/>
            <person name="DeLeo F.R."/>
            <person name="Musser J.M."/>
        </authorList>
    </citation>
    <scope>NUCLEOTIDE SEQUENCE [LARGE SCALE GENOMIC DNA]</scope>
    <source>
        <strain>MGAS9429</strain>
    </source>
</reference>
<accession>Q1JM42</accession>
<organism>
    <name type="scientific">Streptococcus pyogenes serotype M12 (strain MGAS9429)</name>
    <dbReference type="NCBI Taxonomy" id="370551"/>
    <lineage>
        <taxon>Bacteria</taxon>
        <taxon>Bacillati</taxon>
        <taxon>Bacillota</taxon>
        <taxon>Bacilli</taxon>
        <taxon>Lactobacillales</taxon>
        <taxon>Streptococcaceae</taxon>
        <taxon>Streptococcus</taxon>
    </lineage>
</organism>